<sequence>MLKSLKFLLVFIILAQLLSCTPSAPYEIKSPCVSVDIDDNSSLSINPCIRRPINAVNIV</sequence>
<proteinExistence type="predicted"/>
<feature type="chain" id="PRO_0000101347" description="Uncharacterized protein RP288">
    <location>
        <begin position="1"/>
        <end position="59"/>
    </location>
</feature>
<feature type="transmembrane region" description="Helical" evidence="1">
    <location>
        <begin position="7"/>
        <end position="24"/>
    </location>
</feature>
<gene>
    <name type="ordered locus">RP288</name>
</gene>
<evidence type="ECO:0000255" key="1"/>
<evidence type="ECO:0000305" key="2"/>
<comment type="subcellular location">
    <subcellularLocation>
        <location evidence="2">Membrane</location>
        <topology evidence="2">Single-pass membrane protein</topology>
    </subcellularLocation>
</comment>
<protein>
    <recommendedName>
        <fullName>Uncharacterized protein RP288</fullName>
    </recommendedName>
</protein>
<organism>
    <name type="scientific">Rickettsia prowazekii (strain Madrid E)</name>
    <dbReference type="NCBI Taxonomy" id="272947"/>
    <lineage>
        <taxon>Bacteria</taxon>
        <taxon>Pseudomonadati</taxon>
        <taxon>Pseudomonadota</taxon>
        <taxon>Alphaproteobacteria</taxon>
        <taxon>Rickettsiales</taxon>
        <taxon>Rickettsiaceae</taxon>
        <taxon>Rickettsieae</taxon>
        <taxon>Rickettsia</taxon>
        <taxon>typhus group</taxon>
    </lineage>
</organism>
<reference key="1">
    <citation type="journal article" date="1998" name="Nature">
        <title>The genome sequence of Rickettsia prowazekii and the origin of mitochondria.</title>
        <authorList>
            <person name="Andersson S.G.E."/>
            <person name="Zomorodipour A."/>
            <person name="Andersson J.O."/>
            <person name="Sicheritz-Ponten T."/>
            <person name="Alsmark U.C.M."/>
            <person name="Podowski R.M."/>
            <person name="Naeslund A.K."/>
            <person name="Eriksson A.-S."/>
            <person name="Winkler H.H."/>
            <person name="Kurland C.G."/>
        </authorList>
    </citation>
    <scope>NUCLEOTIDE SEQUENCE [LARGE SCALE GENOMIC DNA]</scope>
    <source>
        <strain>Madrid E</strain>
    </source>
</reference>
<keyword id="KW-0472">Membrane</keyword>
<keyword id="KW-1185">Reference proteome</keyword>
<keyword id="KW-0812">Transmembrane</keyword>
<keyword id="KW-1133">Transmembrane helix</keyword>
<accession>Q9ZDN9</accession>
<name>Y288_RICPR</name>
<dbReference type="EMBL" id="AJ235271">
    <property type="protein sequence ID" value="CAA14749.1"/>
    <property type="molecule type" value="Genomic_DNA"/>
</dbReference>
<dbReference type="PIR" id="C71684">
    <property type="entry name" value="C71684"/>
</dbReference>
<dbReference type="RefSeq" id="NP_220672.1">
    <property type="nucleotide sequence ID" value="NC_000963.1"/>
</dbReference>
<dbReference type="RefSeq" id="WP_010886258.1">
    <property type="nucleotide sequence ID" value="NC_000963.1"/>
</dbReference>
<dbReference type="STRING" id="272947.gene:17555369"/>
<dbReference type="EnsemblBacteria" id="CAA14749">
    <property type="protein sequence ID" value="CAA14749"/>
    <property type="gene ID" value="CAA14749"/>
</dbReference>
<dbReference type="KEGG" id="rpr:RP288"/>
<dbReference type="PATRIC" id="fig|272947.5.peg.295"/>
<dbReference type="HOGENOM" id="CLU_209842_0_0_5"/>
<dbReference type="OrthoDB" id="7160533at2"/>
<dbReference type="Proteomes" id="UP000002480">
    <property type="component" value="Chromosome"/>
</dbReference>
<dbReference type="GO" id="GO:0016020">
    <property type="term" value="C:membrane"/>
    <property type="evidence" value="ECO:0007669"/>
    <property type="project" value="UniProtKB-SubCell"/>
</dbReference>
<dbReference type="InterPro" id="IPR024444">
    <property type="entry name" value="DUF2706"/>
</dbReference>
<dbReference type="Pfam" id="PF10913">
    <property type="entry name" value="DUF2706"/>
    <property type="match status" value="1"/>
</dbReference>